<organism>
    <name type="scientific">Bacillus cereus (strain ATCC 14579 / DSM 31 / CCUG 7414 / JCM 2152 / NBRC 15305 / NCIMB 9373 / NCTC 2599 / NRRL B-3711)</name>
    <dbReference type="NCBI Taxonomy" id="226900"/>
    <lineage>
        <taxon>Bacteria</taxon>
        <taxon>Bacillati</taxon>
        <taxon>Bacillota</taxon>
        <taxon>Bacilli</taxon>
        <taxon>Bacillales</taxon>
        <taxon>Bacillaceae</taxon>
        <taxon>Bacillus</taxon>
        <taxon>Bacillus cereus group</taxon>
    </lineage>
</organism>
<keyword id="KW-1003">Cell membrane</keyword>
<keyword id="KW-0472">Membrane</keyword>
<keyword id="KW-0520">NAD</keyword>
<keyword id="KW-0874">Quinone</keyword>
<keyword id="KW-1185">Reference proteome</keyword>
<keyword id="KW-1278">Translocase</keyword>
<keyword id="KW-0812">Transmembrane</keyword>
<keyword id="KW-1133">Transmembrane helix</keyword>
<keyword id="KW-0830">Ubiquinone</keyword>
<comment type="function">
    <text evidence="1">NDH-1 shuttles electrons from NADH, via FMN and iron-sulfur (Fe-S) centers, to quinones in the respiratory chain. The immediate electron acceptor for the enzyme in this species is believed to be ubiquinone. Couples the redox reaction to proton translocation (for every two electrons transferred, four hydrogen ions are translocated across the cytoplasmic membrane), and thus conserves the redox energy in a proton gradient. This subunit may bind ubiquinone.</text>
</comment>
<comment type="catalytic activity">
    <reaction evidence="1">
        <text>a quinone + NADH + 5 H(+)(in) = a quinol + NAD(+) + 4 H(+)(out)</text>
        <dbReference type="Rhea" id="RHEA:57888"/>
        <dbReference type="ChEBI" id="CHEBI:15378"/>
        <dbReference type="ChEBI" id="CHEBI:24646"/>
        <dbReference type="ChEBI" id="CHEBI:57540"/>
        <dbReference type="ChEBI" id="CHEBI:57945"/>
        <dbReference type="ChEBI" id="CHEBI:132124"/>
    </reaction>
</comment>
<comment type="subunit">
    <text evidence="1">NDH-1 is composed of 14 different subunits. Subunits NuoA, H, J, K, L, M, N constitute the membrane sector of the complex.</text>
</comment>
<comment type="subcellular location">
    <subcellularLocation>
        <location evidence="1">Cell membrane</location>
        <topology evidence="1">Multi-pass membrane protein</topology>
    </subcellularLocation>
</comment>
<comment type="similarity">
    <text evidence="1">Belongs to the complex I subunit 1 family.</text>
</comment>
<name>NUOH_BACCR</name>
<gene>
    <name evidence="1" type="primary">nuoH</name>
    <name type="ordered locus">BC_5297</name>
</gene>
<dbReference type="EC" id="7.1.1.-" evidence="1"/>
<dbReference type="EMBL" id="AE016877">
    <property type="protein sequence ID" value="AAP12161.1"/>
    <property type="molecule type" value="Genomic_DNA"/>
</dbReference>
<dbReference type="RefSeq" id="NP_834960.1">
    <property type="nucleotide sequence ID" value="NC_004722.1"/>
</dbReference>
<dbReference type="RefSeq" id="WP_000573426.1">
    <property type="nucleotide sequence ID" value="NZ_CP138336.1"/>
</dbReference>
<dbReference type="SMR" id="Q814X0"/>
<dbReference type="STRING" id="226900.BC_5297"/>
<dbReference type="GeneID" id="67469497"/>
<dbReference type="KEGG" id="bce:BC5297"/>
<dbReference type="PATRIC" id="fig|226900.8.peg.5468"/>
<dbReference type="HOGENOM" id="CLU_015134_0_1_9"/>
<dbReference type="OrthoDB" id="9803734at2"/>
<dbReference type="PRO" id="PR:Q814X0"/>
<dbReference type="Proteomes" id="UP000001417">
    <property type="component" value="Chromosome"/>
</dbReference>
<dbReference type="GO" id="GO:0005886">
    <property type="term" value="C:plasma membrane"/>
    <property type="evidence" value="ECO:0007669"/>
    <property type="project" value="UniProtKB-SubCell"/>
</dbReference>
<dbReference type="GO" id="GO:0016655">
    <property type="term" value="F:oxidoreductase activity, acting on NAD(P)H, quinone or similar compound as acceptor"/>
    <property type="evidence" value="ECO:0007669"/>
    <property type="project" value="UniProtKB-UniRule"/>
</dbReference>
<dbReference type="GO" id="GO:0048038">
    <property type="term" value="F:quinone binding"/>
    <property type="evidence" value="ECO:0007669"/>
    <property type="project" value="UniProtKB-KW"/>
</dbReference>
<dbReference type="GO" id="GO:0009060">
    <property type="term" value="P:aerobic respiration"/>
    <property type="evidence" value="ECO:0000318"/>
    <property type="project" value="GO_Central"/>
</dbReference>
<dbReference type="HAMAP" id="MF_01350">
    <property type="entry name" value="NDH1_NuoH"/>
    <property type="match status" value="1"/>
</dbReference>
<dbReference type="InterPro" id="IPR001694">
    <property type="entry name" value="NADH_UbQ_OxRdtase_su1/FPO"/>
</dbReference>
<dbReference type="InterPro" id="IPR018086">
    <property type="entry name" value="NADH_UbQ_OxRdtase_su1_CS"/>
</dbReference>
<dbReference type="NCBIfam" id="NF004741">
    <property type="entry name" value="PRK06076.1-2"/>
    <property type="match status" value="1"/>
</dbReference>
<dbReference type="PANTHER" id="PTHR11432">
    <property type="entry name" value="NADH DEHYDROGENASE SUBUNIT 1"/>
    <property type="match status" value="1"/>
</dbReference>
<dbReference type="PANTHER" id="PTHR11432:SF3">
    <property type="entry name" value="NADH-UBIQUINONE OXIDOREDUCTASE CHAIN 1"/>
    <property type="match status" value="1"/>
</dbReference>
<dbReference type="Pfam" id="PF00146">
    <property type="entry name" value="NADHdh"/>
    <property type="match status" value="1"/>
</dbReference>
<dbReference type="PROSITE" id="PS00668">
    <property type="entry name" value="COMPLEX1_ND1_2"/>
    <property type="match status" value="1"/>
</dbReference>
<evidence type="ECO:0000255" key="1">
    <source>
        <dbReference type="HAMAP-Rule" id="MF_01350"/>
    </source>
</evidence>
<sequence>MIETLLQSPSSWTNFFIFFGLAVLLLFAVLGFVTYGILAERKVMGFMQGRIGPNQVGGRFGLLQTVADVLKLLLKEDSIPKAADKPLFILAPVIAFAPAFMVLAVIPFTDKFQFADIGVGLLYYIAVSGITTIGVVTGGWASNNKYSLLGGMRAAAQMISYEIPLVMSVIGIVLLAGSLNLNEIVAAQEKVWYIFVQPIGFVVFLIAAVAELNRTPFDLPEAESELVSGYHTEYSGFRWAFFMLSEYVYFFGMASLITVLFLGGWNPVMFLGFIPGAVWFALKFSSVVFLLIWFRVTFPRIRGDQLMEFGWKVLLPIALANIFLTALIKELFF</sequence>
<accession>Q814X0</accession>
<reference key="1">
    <citation type="journal article" date="2003" name="Nature">
        <title>Genome sequence of Bacillus cereus and comparative analysis with Bacillus anthracis.</title>
        <authorList>
            <person name="Ivanova N."/>
            <person name="Sorokin A."/>
            <person name="Anderson I."/>
            <person name="Galleron N."/>
            <person name="Candelon B."/>
            <person name="Kapatral V."/>
            <person name="Bhattacharyya A."/>
            <person name="Reznik G."/>
            <person name="Mikhailova N."/>
            <person name="Lapidus A."/>
            <person name="Chu L."/>
            <person name="Mazur M."/>
            <person name="Goltsman E."/>
            <person name="Larsen N."/>
            <person name="D'Souza M."/>
            <person name="Walunas T."/>
            <person name="Grechkin Y."/>
            <person name="Pusch G."/>
            <person name="Haselkorn R."/>
            <person name="Fonstein M."/>
            <person name="Ehrlich S.D."/>
            <person name="Overbeek R."/>
            <person name="Kyrpides N.C."/>
        </authorList>
    </citation>
    <scope>NUCLEOTIDE SEQUENCE [LARGE SCALE GENOMIC DNA]</scope>
    <source>
        <strain>ATCC 14579 / DSM 31 / CCUG 7414 / JCM 2152 / NBRC 15305 / NCIMB 9373 / NCTC 2599 / NRRL B-3711</strain>
    </source>
</reference>
<feature type="chain" id="PRO_0000240056" description="NADH-quinone oxidoreductase subunit H">
    <location>
        <begin position="1"/>
        <end position="333"/>
    </location>
</feature>
<feature type="transmembrane region" description="Helical" evidence="1">
    <location>
        <begin position="15"/>
        <end position="35"/>
    </location>
</feature>
<feature type="transmembrane region" description="Helical" evidence="1">
    <location>
        <begin position="88"/>
        <end position="108"/>
    </location>
</feature>
<feature type="transmembrane region" description="Helical" evidence="1">
    <location>
        <begin position="117"/>
        <end position="137"/>
    </location>
</feature>
<feature type="transmembrane region" description="Helical" evidence="1">
    <location>
        <begin position="159"/>
        <end position="179"/>
    </location>
</feature>
<feature type="transmembrane region" description="Helical" evidence="1">
    <location>
        <begin position="191"/>
        <end position="211"/>
    </location>
</feature>
<feature type="transmembrane region" description="Helical" evidence="1">
    <location>
        <begin position="239"/>
        <end position="259"/>
    </location>
</feature>
<feature type="transmembrane region" description="Helical" evidence="1">
    <location>
        <begin position="274"/>
        <end position="296"/>
    </location>
</feature>
<feature type="transmembrane region" description="Helical" evidence="1">
    <location>
        <begin position="313"/>
        <end position="333"/>
    </location>
</feature>
<protein>
    <recommendedName>
        <fullName evidence="1">NADH-quinone oxidoreductase subunit H</fullName>
        <ecNumber evidence="1">7.1.1.-</ecNumber>
    </recommendedName>
    <alternativeName>
        <fullName evidence="1">NADH dehydrogenase I subunit H</fullName>
    </alternativeName>
    <alternativeName>
        <fullName evidence="1">NDH-1 subunit H</fullName>
    </alternativeName>
</protein>
<proteinExistence type="inferred from homology"/>